<keyword id="KW-1003">Cell membrane</keyword>
<keyword id="KW-0175">Coiled coil</keyword>
<keyword id="KW-0472">Membrane</keyword>
<keyword id="KW-1185">Reference proteome</keyword>
<keyword id="KW-0807">Transducer</keyword>
<name>GG2_ORYSI</name>
<reference key="1">
    <citation type="submission" date="2009-10" db="EMBL/GenBank/DDBJ databases">
        <title>Molecular cloning and characterization of a cDNA for the gamma2 subunit of a G protein from rice.</title>
        <authorList>
            <person name="Yadav D.K."/>
            <person name="Tuteja N."/>
        </authorList>
    </citation>
    <scope>NUCLEOTIDE SEQUENCE [MRNA]</scope>
    <source>
        <strain>cv. Swarna</strain>
    </source>
</reference>
<reference key="2">
    <citation type="journal article" date="2005" name="PLoS Biol.">
        <title>The genomes of Oryza sativa: a history of duplications.</title>
        <authorList>
            <person name="Yu J."/>
            <person name="Wang J."/>
            <person name="Lin W."/>
            <person name="Li S."/>
            <person name="Li H."/>
            <person name="Zhou J."/>
            <person name="Ni P."/>
            <person name="Dong W."/>
            <person name="Hu S."/>
            <person name="Zeng C."/>
            <person name="Zhang J."/>
            <person name="Zhang Y."/>
            <person name="Li R."/>
            <person name="Xu Z."/>
            <person name="Li S."/>
            <person name="Li X."/>
            <person name="Zheng H."/>
            <person name="Cong L."/>
            <person name="Lin L."/>
            <person name="Yin J."/>
            <person name="Geng J."/>
            <person name="Li G."/>
            <person name="Shi J."/>
            <person name="Liu J."/>
            <person name="Lv H."/>
            <person name="Li J."/>
            <person name="Wang J."/>
            <person name="Deng Y."/>
            <person name="Ran L."/>
            <person name="Shi X."/>
            <person name="Wang X."/>
            <person name="Wu Q."/>
            <person name="Li C."/>
            <person name="Ren X."/>
            <person name="Wang J."/>
            <person name="Wang X."/>
            <person name="Li D."/>
            <person name="Liu D."/>
            <person name="Zhang X."/>
            <person name="Ji Z."/>
            <person name="Zhao W."/>
            <person name="Sun Y."/>
            <person name="Zhang Z."/>
            <person name="Bao J."/>
            <person name="Han Y."/>
            <person name="Dong L."/>
            <person name="Ji J."/>
            <person name="Chen P."/>
            <person name="Wu S."/>
            <person name="Liu J."/>
            <person name="Xiao Y."/>
            <person name="Bu D."/>
            <person name="Tan J."/>
            <person name="Yang L."/>
            <person name="Ye C."/>
            <person name="Zhang J."/>
            <person name="Xu J."/>
            <person name="Zhou Y."/>
            <person name="Yu Y."/>
            <person name="Zhang B."/>
            <person name="Zhuang S."/>
            <person name="Wei H."/>
            <person name="Liu B."/>
            <person name="Lei M."/>
            <person name="Yu H."/>
            <person name="Li Y."/>
            <person name="Xu H."/>
            <person name="Wei S."/>
            <person name="He X."/>
            <person name="Fang L."/>
            <person name="Zhang Z."/>
            <person name="Zhang Y."/>
            <person name="Huang X."/>
            <person name="Su Z."/>
            <person name="Tong W."/>
            <person name="Li J."/>
            <person name="Tong Z."/>
            <person name="Li S."/>
            <person name="Ye J."/>
            <person name="Wang L."/>
            <person name="Fang L."/>
            <person name="Lei T."/>
            <person name="Chen C.-S."/>
            <person name="Chen H.-C."/>
            <person name="Xu Z."/>
            <person name="Li H."/>
            <person name="Huang H."/>
            <person name="Zhang F."/>
            <person name="Xu H."/>
            <person name="Li N."/>
            <person name="Zhao C."/>
            <person name="Li S."/>
            <person name="Dong L."/>
            <person name="Huang Y."/>
            <person name="Li L."/>
            <person name="Xi Y."/>
            <person name="Qi Q."/>
            <person name="Li W."/>
            <person name="Zhang B."/>
            <person name="Hu W."/>
            <person name="Zhang Y."/>
            <person name="Tian X."/>
            <person name="Jiao Y."/>
            <person name="Liang X."/>
            <person name="Jin J."/>
            <person name="Gao L."/>
            <person name="Zheng W."/>
            <person name="Hao B."/>
            <person name="Liu S.-M."/>
            <person name="Wang W."/>
            <person name="Yuan L."/>
            <person name="Cao M."/>
            <person name="McDermott J."/>
            <person name="Samudrala R."/>
            <person name="Wang J."/>
            <person name="Wong G.K.-S."/>
            <person name="Yang H."/>
        </authorList>
    </citation>
    <scope>NUCLEOTIDE SEQUENCE [LARGE SCALE GENOMIC DNA]</scope>
    <source>
        <strain>cv. 93-11</strain>
    </source>
</reference>
<comment type="function">
    <text evidence="1">Guanine nucleotide-binding proteins (G proteins) are involved as modulators or transducers in various transmembrane signaling systems.</text>
</comment>
<comment type="subunit">
    <text evidence="1">G proteins are composed of 3 units, alpha, beta and gamma. Interacts with the beta subunit RGB1.</text>
</comment>
<comment type="subcellular location">
    <subcellularLocation>
        <location evidence="1">Cell membrane</location>
    </subcellularLocation>
</comment>
<proteinExistence type="evidence at transcript level"/>
<feature type="chain" id="PRO_0000432814" description="Guanine nucleotide-binding protein subunit gamma 2">
    <location>
        <begin position="1"/>
        <end position="150"/>
    </location>
</feature>
<feature type="domain" description="G protein gamma" evidence="3">
    <location>
        <begin position="71"/>
        <end position="137"/>
    </location>
</feature>
<feature type="region of interest" description="Disordered" evidence="4">
    <location>
        <begin position="1"/>
        <end position="59"/>
    </location>
</feature>
<feature type="coiled-coil region" evidence="2">
    <location>
        <begin position="65"/>
        <end position="97"/>
    </location>
</feature>
<feature type="compositionally biased region" description="Acidic residues" evidence="4">
    <location>
        <begin position="1"/>
        <end position="11"/>
    </location>
</feature>
<feature type="sequence conflict" description="In Ref. 1; ACY05516." evidence="5" ref="1">
    <original>M</original>
    <variation>V</variation>
    <location>
        <position position="58"/>
    </location>
</feature>
<sequence length="150" mass="16857">MRGEANGEEEQQPPRRNHLRDDAEEEEEVERRAARPVSGQQQQQQRRRPTDVGGGAAMRSVGYVGKHRLSAAIARLDQELQSLQDELNELETMEPASAACQGVITSTEGKSDPLLPVTIGPENASWERWFQRVRSSRSNKWWASKGSDFS</sequence>
<evidence type="ECO:0000250" key="1">
    <source>
        <dbReference type="UniProtKB" id="Q6YXX9"/>
    </source>
</evidence>
<evidence type="ECO:0000255" key="2"/>
<evidence type="ECO:0000255" key="3">
    <source>
        <dbReference type="PROSITE-ProRule" id="PRU00592"/>
    </source>
</evidence>
<evidence type="ECO:0000256" key="4">
    <source>
        <dbReference type="SAM" id="MobiDB-lite"/>
    </source>
</evidence>
<evidence type="ECO:0000305" key="5"/>
<evidence type="ECO:0000312" key="6">
    <source>
        <dbReference type="EMBL" id="EAY84399.1"/>
    </source>
</evidence>
<accession>A2X0N9</accession>
<accession>D0VE83</accession>
<gene>
    <name evidence="5" type="primary">RGG2</name>
    <name evidence="6" type="ORF">OsI_05775</name>
</gene>
<organism>
    <name type="scientific">Oryza sativa subsp. indica</name>
    <name type="common">Rice</name>
    <dbReference type="NCBI Taxonomy" id="39946"/>
    <lineage>
        <taxon>Eukaryota</taxon>
        <taxon>Viridiplantae</taxon>
        <taxon>Streptophyta</taxon>
        <taxon>Embryophyta</taxon>
        <taxon>Tracheophyta</taxon>
        <taxon>Spermatophyta</taxon>
        <taxon>Magnoliopsida</taxon>
        <taxon>Liliopsida</taxon>
        <taxon>Poales</taxon>
        <taxon>Poaceae</taxon>
        <taxon>BOP clade</taxon>
        <taxon>Oryzoideae</taxon>
        <taxon>Oryzeae</taxon>
        <taxon>Oryzinae</taxon>
        <taxon>Oryza</taxon>
        <taxon>Oryza sativa</taxon>
    </lineage>
</organism>
<dbReference type="EMBL" id="GU066806">
    <property type="protein sequence ID" value="ACY05516.1"/>
    <property type="molecule type" value="mRNA"/>
</dbReference>
<dbReference type="EMBL" id="CM000127">
    <property type="protein sequence ID" value="EAY84399.1"/>
    <property type="molecule type" value="Genomic_DNA"/>
</dbReference>
<dbReference type="SMR" id="A2X0N9"/>
<dbReference type="STRING" id="39946.A2X0N9"/>
<dbReference type="EnsemblPlants" id="BGIOSGA007490-TA">
    <property type="protein sequence ID" value="BGIOSGA007490-PA"/>
    <property type="gene ID" value="BGIOSGA007490"/>
</dbReference>
<dbReference type="EnsemblPlants" id="OsGoSa_02g0002950.01">
    <property type="protein sequence ID" value="OsGoSa_02g0002950.01"/>
    <property type="gene ID" value="OsGoSa_02g0002950"/>
</dbReference>
<dbReference type="EnsemblPlants" id="OsIR64_02g0002880.01">
    <property type="protein sequence ID" value="OsIR64_02g0002880.01"/>
    <property type="gene ID" value="OsIR64_02g0002880"/>
</dbReference>
<dbReference type="EnsemblPlants" id="OsKYG_02g0002880.01">
    <property type="protein sequence ID" value="OsKYG_02g0002880.01"/>
    <property type="gene ID" value="OsKYG_02g0002880"/>
</dbReference>
<dbReference type="EnsemblPlants" id="OsLaMu_02g0003000.01">
    <property type="protein sequence ID" value="OsLaMu_02g0003000.01"/>
    <property type="gene ID" value="OsLaMu_02g0003000"/>
</dbReference>
<dbReference type="EnsemblPlants" id="OsLiXu_02g0003040.01">
    <property type="protein sequence ID" value="OsLiXu_02g0003040.01"/>
    <property type="gene ID" value="OsLiXu_02g0003040"/>
</dbReference>
<dbReference type="EnsemblPlants" id="OsPr106_02g0002970.01">
    <property type="protein sequence ID" value="OsPr106_02g0002970.01"/>
    <property type="gene ID" value="OsPr106_02g0002970"/>
</dbReference>
<dbReference type="Gramene" id="BGIOSGA007490-TA">
    <property type="protein sequence ID" value="BGIOSGA007490-PA"/>
    <property type="gene ID" value="BGIOSGA007490"/>
</dbReference>
<dbReference type="Gramene" id="OsGoSa_02g0002950.01">
    <property type="protein sequence ID" value="OsGoSa_02g0002950.01"/>
    <property type="gene ID" value="OsGoSa_02g0002950"/>
</dbReference>
<dbReference type="Gramene" id="OsIR64_02g0002880.01">
    <property type="protein sequence ID" value="OsIR64_02g0002880.01"/>
    <property type="gene ID" value="OsIR64_02g0002880"/>
</dbReference>
<dbReference type="Gramene" id="OsKYG_02g0002880.01">
    <property type="protein sequence ID" value="OsKYG_02g0002880.01"/>
    <property type="gene ID" value="OsKYG_02g0002880"/>
</dbReference>
<dbReference type="Gramene" id="OsLaMu_02g0003000.01">
    <property type="protein sequence ID" value="OsLaMu_02g0003000.01"/>
    <property type="gene ID" value="OsLaMu_02g0003000"/>
</dbReference>
<dbReference type="Gramene" id="OsLiXu_02g0003040.01">
    <property type="protein sequence ID" value="OsLiXu_02g0003040.01"/>
    <property type="gene ID" value="OsLiXu_02g0003040"/>
</dbReference>
<dbReference type="Gramene" id="OsPr106_02g0002970.01">
    <property type="protein sequence ID" value="OsPr106_02g0002970.01"/>
    <property type="gene ID" value="OsPr106_02g0002970"/>
</dbReference>
<dbReference type="HOGENOM" id="CLU_105699_0_0_1"/>
<dbReference type="OMA" id="RGEDQEH"/>
<dbReference type="OrthoDB" id="776094at2759"/>
<dbReference type="Proteomes" id="UP000007015">
    <property type="component" value="Chromosome 2"/>
</dbReference>
<dbReference type="GO" id="GO:0005886">
    <property type="term" value="C:plasma membrane"/>
    <property type="evidence" value="ECO:0007669"/>
    <property type="project" value="UniProtKB-SubCell"/>
</dbReference>
<dbReference type="GO" id="GO:0007186">
    <property type="term" value="P:G protein-coupled receptor signaling pathway"/>
    <property type="evidence" value="ECO:0007669"/>
    <property type="project" value="InterPro"/>
</dbReference>
<dbReference type="InterPro" id="IPR015898">
    <property type="entry name" value="G-protein_gamma-like_dom"/>
</dbReference>
<dbReference type="InterPro" id="IPR045878">
    <property type="entry name" value="GG1/2"/>
</dbReference>
<dbReference type="PANTHER" id="PTHR35129">
    <property type="entry name" value="GUANINE NUCLEOTIDE-BINDING PROTEIN SUBUNIT GAMMA 1"/>
    <property type="match status" value="1"/>
</dbReference>
<dbReference type="PANTHER" id="PTHR35129:SF5">
    <property type="entry name" value="GUANINE NUCLEOTIDE-BINDING PROTEIN SUBUNIT GAMMA 2"/>
    <property type="match status" value="1"/>
</dbReference>
<dbReference type="Pfam" id="PF00631">
    <property type="entry name" value="G-gamma"/>
    <property type="match status" value="1"/>
</dbReference>
<dbReference type="SMART" id="SM01224">
    <property type="entry name" value="G_gamma"/>
    <property type="match status" value="1"/>
</dbReference>
<protein>
    <recommendedName>
        <fullName evidence="5">Guanine nucleotide-binding protein subunit gamma 2</fullName>
    </recommendedName>
    <alternativeName>
        <fullName evidence="5">Ggamma-subunit 2</fullName>
    </alternativeName>
    <alternativeName>
        <fullName evidence="5">Heterotrimeric G protein gamma-subunit 2</fullName>
    </alternativeName>
</protein>